<accession>B7M3W3</accession>
<sequence>MFGKGGLGNLMKQAQQMQEKMQKMQEEIAQLEVTGESGAGLIKVTINGAHNCRRVEIDPSLLEDDKEMLEDLVAAAFNDAARRIEETQKEKMASVSSGMQLPPGFKMPF</sequence>
<feature type="chain" id="PRO_1000119320" description="Nucleoid-associated protein YbaB">
    <location>
        <begin position="1"/>
        <end position="109"/>
    </location>
</feature>
<organism>
    <name type="scientific">Escherichia coli O8 (strain IAI1)</name>
    <dbReference type="NCBI Taxonomy" id="585034"/>
    <lineage>
        <taxon>Bacteria</taxon>
        <taxon>Pseudomonadati</taxon>
        <taxon>Pseudomonadota</taxon>
        <taxon>Gammaproteobacteria</taxon>
        <taxon>Enterobacterales</taxon>
        <taxon>Enterobacteriaceae</taxon>
        <taxon>Escherichia</taxon>
    </lineage>
</organism>
<name>YBAB_ECO8A</name>
<evidence type="ECO:0000255" key="1">
    <source>
        <dbReference type="HAMAP-Rule" id="MF_00274"/>
    </source>
</evidence>
<protein>
    <recommendedName>
        <fullName evidence="1">Nucleoid-associated protein YbaB</fullName>
    </recommendedName>
</protein>
<comment type="function">
    <text evidence="1">Binds to DNA and alters its conformation. May be involved in regulation of gene expression, nucleoid organization and DNA protection.</text>
</comment>
<comment type="subunit">
    <text evidence="1">Homodimer.</text>
</comment>
<comment type="subcellular location">
    <subcellularLocation>
        <location evidence="1">Cytoplasm</location>
        <location evidence="1">Nucleoid</location>
    </subcellularLocation>
</comment>
<comment type="similarity">
    <text evidence="1">Belongs to the YbaB/EbfC family.</text>
</comment>
<reference key="1">
    <citation type="journal article" date="2009" name="PLoS Genet.">
        <title>Organised genome dynamics in the Escherichia coli species results in highly diverse adaptive paths.</title>
        <authorList>
            <person name="Touchon M."/>
            <person name="Hoede C."/>
            <person name="Tenaillon O."/>
            <person name="Barbe V."/>
            <person name="Baeriswyl S."/>
            <person name="Bidet P."/>
            <person name="Bingen E."/>
            <person name="Bonacorsi S."/>
            <person name="Bouchier C."/>
            <person name="Bouvet O."/>
            <person name="Calteau A."/>
            <person name="Chiapello H."/>
            <person name="Clermont O."/>
            <person name="Cruveiller S."/>
            <person name="Danchin A."/>
            <person name="Diard M."/>
            <person name="Dossat C."/>
            <person name="Karoui M.E."/>
            <person name="Frapy E."/>
            <person name="Garry L."/>
            <person name="Ghigo J.M."/>
            <person name="Gilles A.M."/>
            <person name="Johnson J."/>
            <person name="Le Bouguenec C."/>
            <person name="Lescat M."/>
            <person name="Mangenot S."/>
            <person name="Martinez-Jehanne V."/>
            <person name="Matic I."/>
            <person name="Nassif X."/>
            <person name="Oztas S."/>
            <person name="Petit M.A."/>
            <person name="Pichon C."/>
            <person name="Rouy Z."/>
            <person name="Ruf C.S."/>
            <person name="Schneider D."/>
            <person name="Tourret J."/>
            <person name="Vacherie B."/>
            <person name="Vallenet D."/>
            <person name="Medigue C."/>
            <person name="Rocha E.P.C."/>
            <person name="Denamur E."/>
        </authorList>
    </citation>
    <scope>NUCLEOTIDE SEQUENCE [LARGE SCALE GENOMIC DNA]</scope>
    <source>
        <strain>IAI1</strain>
    </source>
</reference>
<dbReference type="EMBL" id="CU928160">
    <property type="protein sequence ID" value="CAQ97346.1"/>
    <property type="molecule type" value="Genomic_DNA"/>
</dbReference>
<dbReference type="RefSeq" id="WP_001442196.1">
    <property type="nucleotide sequence ID" value="NC_011741.1"/>
</dbReference>
<dbReference type="SMR" id="B7M3W3"/>
<dbReference type="KEGG" id="ecr:ECIAI1_0474"/>
<dbReference type="HOGENOM" id="CLU_140930_0_0_6"/>
<dbReference type="GO" id="GO:0043590">
    <property type="term" value="C:bacterial nucleoid"/>
    <property type="evidence" value="ECO:0007669"/>
    <property type="project" value="UniProtKB-UniRule"/>
</dbReference>
<dbReference type="GO" id="GO:0005829">
    <property type="term" value="C:cytosol"/>
    <property type="evidence" value="ECO:0007669"/>
    <property type="project" value="TreeGrafter"/>
</dbReference>
<dbReference type="GO" id="GO:0003677">
    <property type="term" value="F:DNA binding"/>
    <property type="evidence" value="ECO:0007669"/>
    <property type="project" value="UniProtKB-UniRule"/>
</dbReference>
<dbReference type="FunFam" id="3.30.1310.10:FF:000001">
    <property type="entry name" value="Nucleoid-associated protein YbaB"/>
    <property type="match status" value="1"/>
</dbReference>
<dbReference type="Gene3D" id="3.30.1310.10">
    <property type="entry name" value="Nucleoid-associated protein YbaB-like domain"/>
    <property type="match status" value="1"/>
</dbReference>
<dbReference type="HAMAP" id="MF_00274">
    <property type="entry name" value="DNA_YbaB_EbfC"/>
    <property type="match status" value="1"/>
</dbReference>
<dbReference type="InterPro" id="IPR036894">
    <property type="entry name" value="YbaB-like_sf"/>
</dbReference>
<dbReference type="InterPro" id="IPR004401">
    <property type="entry name" value="YbaB/EbfC"/>
</dbReference>
<dbReference type="NCBIfam" id="TIGR00103">
    <property type="entry name" value="DNA_YbaB_EbfC"/>
    <property type="match status" value="1"/>
</dbReference>
<dbReference type="PANTHER" id="PTHR33449">
    <property type="entry name" value="NUCLEOID-ASSOCIATED PROTEIN YBAB"/>
    <property type="match status" value="1"/>
</dbReference>
<dbReference type="PANTHER" id="PTHR33449:SF1">
    <property type="entry name" value="NUCLEOID-ASSOCIATED PROTEIN YBAB"/>
    <property type="match status" value="1"/>
</dbReference>
<dbReference type="Pfam" id="PF02575">
    <property type="entry name" value="YbaB_DNA_bd"/>
    <property type="match status" value="1"/>
</dbReference>
<dbReference type="PIRSF" id="PIRSF004555">
    <property type="entry name" value="UCP004555"/>
    <property type="match status" value="1"/>
</dbReference>
<dbReference type="SUPFAM" id="SSF82607">
    <property type="entry name" value="YbaB-like"/>
    <property type="match status" value="1"/>
</dbReference>
<proteinExistence type="inferred from homology"/>
<keyword id="KW-0963">Cytoplasm</keyword>
<keyword id="KW-0238">DNA-binding</keyword>
<gene>
    <name evidence="1" type="primary">ybaB</name>
    <name type="ordered locus">ECIAI1_0474</name>
</gene>